<evidence type="ECO:0000255" key="1"/>
<evidence type="ECO:0000269" key="2">
    <source>
    </source>
</evidence>
<evidence type="ECO:0000303" key="3">
    <source>
    </source>
</evidence>
<evidence type="ECO:0000305" key="4"/>
<evidence type="ECO:0000305" key="5">
    <source>
    </source>
</evidence>
<evidence type="ECO:0000312" key="6">
    <source>
        <dbReference type="EMBL" id="AAY81414.1"/>
    </source>
</evidence>
<reference key="1">
    <citation type="journal article" date="2005" name="J. Bacteriol.">
        <title>The genome of Sulfolobus acidocaldarius, a model organism of the Crenarchaeota.</title>
        <authorList>
            <person name="Chen L."/>
            <person name="Bruegger K."/>
            <person name="Skovgaard M."/>
            <person name="Redder P."/>
            <person name="She Q."/>
            <person name="Torarinsson E."/>
            <person name="Greve B."/>
            <person name="Awayez M."/>
            <person name="Zibat A."/>
            <person name="Klenk H.-P."/>
            <person name="Garrett R.A."/>
        </authorList>
    </citation>
    <scope>NUCLEOTIDE SEQUENCE [LARGE SCALE GENOMIC DNA]</scope>
    <source>
        <strain>ATCC 33909 / DSM 639 / JCM 8929 / NBRC 15157 / NCIMB 11770</strain>
    </source>
</reference>
<reference key="2">
    <citation type="journal article" date="2018" name="Appl. Environ. Microbiol.">
        <title>Sulfolobus acidocaldarius transports pentoses via a carbohydrate uptake transporter 2 (CUT2)-type ABC transporter and metabolizes them through the aldolase-independent Weimberg pathway.</title>
        <authorList>
            <person name="Wagner M."/>
            <person name="Shen L."/>
            <person name="Albersmeier A."/>
            <person name="van der Kolk N."/>
            <person name="Kim S."/>
            <person name="Cha J."/>
            <person name="Braesen C."/>
            <person name="Kalinowski J."/>
            <person name="Siebers B."/>
            <person name="Albers S.V."/>
        </authorList>
    </citation>
    <scope>FUNCTION</scope>
    <scope>SUBUNIT</scope>
    <scope>INDUCTION</scope>
    <scope>DISRUPTION PHENOTYPE</scope>
    <source>
        <strain>MW001</strain>
    </source>
</reference>
<sequence length="356" mass="38179">MNILNVVRRFEFQLFLVNVIIALFFYFENSAYFSSNNITTIFQYLAEIGIIAIGEAMLMLCGEIDLSPPALANFVPLITLTIYNSIYQAISPTPAIVVSILLSLGLASLIGLMNGLITTKAKVNSLITTVGTLFLFNGIALIYSGGYPESFPYFRFLGGTVSILPVPFIWSLGALVFLILLLHYTKIGVWTIAAGSNPTGASEVGVPVDRVKIINFIIMANIGALVGIIQGSRVLTIGATNFTADVVLEGIAAAVIGGTSLVGGKGSLVGAFLGSVFISELLNGFNILGINAYEFDAILGGAIVVVMVLSYYAKRASYKLKSIATATSSSPEGKDRITKILKFKIQKIYRRVEENE</sequence>
<dbReference type="EMBL" id="CP000077">
    <property type="protein sequence ID" value="AAY81414.1"/>
    <property type="molecule type" value="Genomic_DNA"/>
</dbReference>
<dbReference type="RefSeq" id="WP_011278916.1">
    <property type="nucleotide sequence ID" value="NC_007181.1"/>
</dbReference>
<dbReference type="STRING" id="330779.Saci_2121"/>
<dbReference type="GeneID" id="14552638"/>
<dbReference type="GeneID" id="78442482"/>
<dbReference type="KEGG" id="sai:Saci_2121"/>
<dbReference type="PATRIC" id="fig|330779.12.peg.2126"/>
<dbReference type="eggNOG" id="arCOG00263">
    <property type="taxonomic scope" value="Archaea"/>
</dbReference>
<dbReference type="HOGENOM" id="CLU_028880_0_1_2"/>
<dbReference type="BRENDA" id="7.5.2.13">
    <property type="organism ID" value="6160"/>
</dbReference>
<dbReference type="Proteomes" id="UP000001018">
    <property type="component" value="Chromosome"/>
</dbReference>
<dbReference type="GO" id="GO:0005886">
    <property type="term" value="C:plasma membrane"/>
    <property type="evidence" value="ECO:0007669"/>
    <property type="project" value="UniProtKB-SubCell"/>
</dbReference>
<dbReference type="GO" id="GO:0022857">
    <property type="term" value="F:transmembrane transporter activity"/>
    <property type="evidence" value="ECO:0007669"/>
    <property type="project" value="InterPro"/>
</dbReference>
<dbReference type="CDD" id="cd06579">
    <property type="entry name" value="TM_PBP1_transp_AraH_like"/>
    <property type="match status" value="1"/>
</dbReference>
<dbReference type="InterPro" id="IPR001851">
    <property type="entry name" value="ABC_transp_permease"/>
</dbReference>
<dbReference type="PANTHER" id="PTHR32196">
    <property type="entry name" value="ABC TRANSPORTER PERMEASE PROTEIN YPHD-RELATED-RELATED"/>
    <property type="match status" value="1"/>
</dbReference>
<dbReference type="Pfam" id="PF02653">
    <property type="entry name" value="BPD_transp_2"/>
    <property type="match status" value="1"/>
</dbReference>
<proteinExistence type="evidence at protein level"/>
<protein>
    <recommendedName>
        <fullName evidence="4">Xylose/arabinose import permease protein XylH</fullName>
    </recommendedName>
</protein>
<accession>Q4J711</accession>
<gene>
    <name evidence="3" type="primary">xylH</name>
    <name evidence="6" type="ordered locus">Saci_2121</name>
</gene>
<keyword id="KW-1003">Cell membrane</keyword>
<keyword id="KW-0472">Membrane</keyword>
<keyword id="KW-1185">Reference proteome</keyword>
<keyword id="KW-0762">Sugar transport</keyword>
<keyword id="KW-0812">Transmembrane</keyword>
<keyword id="KW-1133">Transmembrane helix</keyword>
<keyword id="KW-0813">Transport</keyword>
<organism>
    <name type="scientific">Sulfolobus acidocaldarius (strain ATCC 33909 / DSM 639 / JCM 8929 / NBRC 15157 / NCIMB 11770)</name>
    <dbReference type="NCBI Taxonomy" id="330779"/>
    <lineage>
        <taxon>Archaea</taxon>
        <taxon>Thermoproteota</taxon>
        <taxon>Thermoprotei</taxon>
        <taxon>Sulfolobales</taxon>
        <taxon>Sulfolobaceae</taxon>
        <taxon>Sulfolobus</taxon>
    </lineage>
</organism>
<name>XYLH_SULAC</name>
<comment type="function">
    <text evidence="2 4">Part of the ABC transporter complex XylFGH involved in the uptake of xylose and arabinose (PubMed:29150511). Responsible for the translocation of the substrate across the membrane (Probable).</text>
</comment>
<comment type="subunit">
    <text evidence="5">The complex is composed of two ATP-binding proteins (XylG), two transmembrane proteins (XylH) and a solute-binding protein (XylF).</text>
</comment>
<comment type="subcellular location">
    <subcellularLocation>
        <location evidence="4">Cell membrane</location>
        <topology evidence="1">Multi-pass membrane protein</topology>
    </subcellularLocation>
</comment>
<comment type="induction">
    <text evidence="2">Up-regulated in the presence of D-xylose, L-arabinose and D-arabinose.</text>
</comment>
<comment type="disruption phenotype">
    <text evidence="2">Deletion of the gene results in a growth defect on D-xylose and L-arabinose.</text>
</comment>
<comment type="similarity">
    <text evidence="4">Belongs to the binding-protein-dependent transport system permease family.</text>
</comment>
<feature type="chain" id="PRO_0000449395" description="Xylose/arabinose import permease protein XylH">
    <location>
        <begin position="1"/>
        <end position="356"/>
    </location>
</feature>
<feature type="transmembrane region" description="Helical" evidence="1">
    <location>
        <begin position="14"/>
        <end position="34"/>
    </location>
</feature>
<feature type="transmembrane region" description="Helical" evidence="1">
    <location>
        <begin position="41"/>
        <end position="61"/>
    </location>
</feature>
<feature type="transmembrane region" description="Helical" evidence="1">
    <location>
        <begin position="70"/>
        <end position="90"/>
    </location>
</feature>
<feature type="transmembrane region" description="Helical" evidence="1">
    <location>
        <begin position="96"/>
        <end position="116"/>
    </location>
</feature>
<feature type="transmembrane region" description="Helical" evidence="1">
    <location>
        <begin position="126"/>
        <end position="146"/>
    </location>
</feature>
<feature type="transmembrane region" description="Helical" evidence="1">
    <location>
        <begin position="161"/>
        <end position="181"/>
    </location>
</feature>
<feature type="transmembrane region" description="Helical" evidence="1">
    <location>
        <begin position="211"/>
        <end position="231"/>
    </location>
</feature>
<feature type="transmembrane region" description="Helical" evidence="1">
    <location>
        <begin position="242"/>
        <end position="262"/>
    </location>
</feature>
<feature type="transmembrane region" description="Helical" evidence="1">
    <location>
        <begin position="266"/>
        <end position="286"/>
    </location>
</feature>
<feature type="transmembrane region" description="Helical" evidence="1">
    <location>
        <begin position="287"/>
        <end position="307"/>
    </location>
</feature>